<proteinExistence type="evidence at transcript level"/>
<accession>P27779</accession>
<accession>Q9VP54</accession>
<reference key="1">
    <citation type="journal article" date="1991" name="Dev. Biol.">
        <title>20-Hydroxyecdysone is required for, and negatively regulates, transcription of Drosophila pupal cuticle protein genes.</title>
        <authorList>
            <person name="Apple R.T."/>
            <person name="Fristrom J.W."/>
        </authorList>
    </citation>
    <scope>NUCLEOTIDE SEQUENCE [GENOMIC DNA / MRNA]</scope>
    <source>
        <strain>Oregon-R</strain>
    </source>
</reference>
<reference key="2">
    <citation type="journal article" date="2000" name="Science">
        <title>The genome sequence of Drosophila melanogaster.</title>
        <authorList>
            <person name="Adams M.D."/>
            <person name="Celniker S.E."/>
            <person name="Holt R.A."/>
            <person name="Evans C.A."/>
            <person name="Gocayne J.D."/>
            <person name="Amanatides P.G."/>
            <person name="Scherer S.E."/>
            <person name="Li P.W."/>
            <person name="Hoskins R.A."/>
            <person name="Galle R.F."/>
            <person name="George R.A."/>
            <person name="Lewis S.E."/>
            <person name="Richards S."/>
            <person name="Ashburner M."/>
            <person name="Henderson S.N."/>
            <person name="Sutton G.G."/>
            <person name="Wortman J.R."/>
            <person name="Yandell M.D."/>
            <person name="Zhang Q."/>
            <person name="Chen L.X."/>
            <person name="Brandon R.C."/>
            <person name="Rogers Y.-H.C."/>
            <person name="Blazej R.G."/>
            <person name="Champe M."/>
            <person name="Pfeiffer B.D."/>
            <person name="Wan K.H."/>
            <person name="Doyle C."/>
            <person name="Baxter E.G."/>
            <person name="Helt G."/>
            <person name="Nelson C.R."/>
            <person name="Miklos G.L.G."/>
            <person name="Abril J.F."/>
            <person name="Agbayani A."/>
            <person name="An H.-J."/>
            <person name="Andrews-Pfannkoch C."/>
            <person name="Baldwin D."/>
            <person name="Ballew R.M."/>
            <person name="Basu A."/>
            <person name="Baxendale J."/>
            <person name="Bayraktaroglu L."/>
            <person name="Beasley E.M."/>
            <person name="Beeson K.Y."/>
            <person name="Benos P.V."/>
            <person name="Berman B.P."/>
            <person name="Bhandari D."/>
            <person name="Bolshakov S."/>
            <person name="Borkova D."/>
            <person name="Botchan M.R."/>
            <person name="Bouck J."/>
            <person name="Brokstein P."/>
            <person name="Brottier P."/>
            <person name="Burtis K.C."/>
            <person name="Busam D.A."/>
            <person name="Butler H."/>
            <person name="Cadieu E."/>
            <person name="Center A."/>
            <person name="Chandra I."/>
            <person name="Cherry J.M."/>
            <person name="Cawley S."/>
            <person name="Dahlke C."/>
            <person name="Davenport L.B."/>
            <person name="Davies P."/>
            <person name="de Pablos B."/>
            <person name="Delcher A."/>
            <person name="Deng Z."/>
            <person name="Mays A.D."/>
            <person name="Dew I."/>
            <person name="Dietz S.M."/>
            <person name="Dodson K."/>
            <person name="Doup L.E."/>
            <person name="Downes M."/>
            <person name="Dugan-Rocha S."/>
            <person name="Dunkov B.C."/>
            <person name="Dunn P."/>
            <person name="Durbin K.J."/>
            <person name="Evangelista C.C."/>
            <person name="Ferraz C."/>
            <person name="Ferriera S."/>
            <person name="Fleischmann W."/>
            <person name="Fosler C."/>
            <person name="Gabrielian A.E."/>
            <person name="Garg N.S."/>
            <person name="Gelbart W.M."/>
            <person name="Glasser K."/>
            <person name="Glodek A."/>
            <person name="Gong F."/>
            <person name="Gorrell J.H."/>
            <person name="Gu Z."/>
            <person name="Guan P."/>
            <person name="Harris M."/>
            <person name="Harris N.L."/>
            <person name="Harvey D.A."/>
            <person name="Heiman T.J."/>
            <person name="Hernandez J.R."/>
            <person name="Houck J."/>
            <person name="Hostin D."/>
            <person name="Houston K.A."/>
            <person name="Howland T.J."/>
            <person name="Wei M.-H."/>
            <person name="Ibegwam C."/>
            <person name="Jalali M."/>
            <person name="Kalush F."/>
            <person name="Karpen G.H."/>
            <person name="Ke Z."/>
            <person name="Kennison J.A."/>
            <person name="Ketchum K.A."/>
            <person name="Kimmel B.E."/>
            <person name="Kodira C.D."/>
            <person name="Kraft C.L."/>
            <person name="Kravitz S."/>
            <person name="Kulp D."/>
            <person name="Lai Z."/>
            <person name="Lasko P."/>
            <person name="Lei Y."/>
            <person name="Levitsky A.A."/>
            <person name="Li J.H."/>
            <person name="Li Z."/>
            <person name="Liang Y."/>
            <person name="Lin X."/>
            <person name="Liu X."/>
            <person name="Mattei B."/>
            <person name="McIntosh T.C."/>
            <person name="McLeod M.P."/>
            <person name="McPherson D."/>
            <person name="Merkulov G."/>
            <person name="Milshina N.V."/>
            <person name="Mobarry C."/>
            <person name="Morris J."/>
            <person name="Moshrefi A."/>
            <person name="Mount S.M."/>
            <person name="Moy M."/>
            <person name="Murphy B."/>
            <person name="Murphy L."/>
            <person name="Muzny D.M."/>
            <person name="Nelson D.L."/>
            <person name="Nelson D.R."/>
            <person name="Nelson K.A."/>
            <person name="Nixon K."/>
            <person name="Nusskern D.R."/>
            <person name="Pacleb J.M."/>
            <person name="Palazzolo M."/>
            <person name="Pittman G.S."/>
            <person name="Pan S."/>
            <person name="Pollard J."/>
            <person name="Puri V."/>
            <person name="Reese M.G."/>
            <person name="Reinert K."/>
            <person name="Remington K."/>
            <person name="Saunders R.D.C."/>
            <person name="Scheeler F."/>
            <person name="Shen H."/>
            <person name="Shue B.C."/>
            <person name="Siden-Kiamos I."/>
            <person name="Simpson M."/>
            <person name="Skupski M.P."/>
            <person name="Smith T.J."/>
            <person name="Spier E."/>
            <person name="Spradling A.C."/>
            <person name="Stapleton M."/>
            <person name="Strong R."/>
            <person name="Sun E."/>
            <person name="Svirskas R."/>
            <person name="Tector C."/>
            <person name="Turner R."/>
            <person name="Venter E."/>
            <person name="Wang A.H."/>
            <person name="Wang X."/>
            <person name="Wang Z.-Y."/>
            <person name="Wassarman D.A."/>
            <person name="Weinstock G.M."/>
            <person name="Weissenbach J."/>
            <person name="Williams S.M."/>
            <person name="Woodage T."/>
            <person name="Worley K.C."/>
            <person name="Wu D."/>
            <person name="Yang S."/>
            <person name="Yao Q.A."/>
            <person name="Ye J."/>
            <person name="Yeh R.-F."/>
            <person name="Zaveri J.S."/>
            <person name="Zhan M."/>
            <person name="Zhang G."/>
            <person name="Zhao Q."/>
            <person name="Zheng L."/>
            <person name="Zheng X.H."/>
            <person name="Zhong F.N."/>
            <person name="Zhong W."/>
            <person name="Zhou X."/>
            <person name="Zhu S.C."/>
            <person name="Zhu X."/>
            <person name="Smith H.O."/>
            <person name="Gibbs R.A."/>
            <person name="Myers E.W."/>
            <person name="Rubin G.M."/>
            <person name="Venter J.C."/>
        </authorList>
    </citation>
    <scope>NUCLEOTIDE SEQUENCE [LARGE SCALE GENOMIC DNA]</scope>
    <source>
        <strain>Berkeley</strain>
    </source>
</reference>
<reference key="3">
    <citation type="journal article" date="2002" name="Genome Biol.">
        <title>Annotation of the Drosophila melanogaster euchromatic genome: a systematic review.</title>
        <authorList>
            <person name="Misra S."/>
            <person name="Crosby M.A."/>
            <person name="Mungall C.J."/>
            <person name="Matthews B.B."/>
            <person name="Campbell K.S."/>
            <person name="Hradecky P."/>
            <person name="Huang Y."/>
            <person name="Kaminker J.S."/>
            <person name="Millburn G.H."/>
            <person name="Prochnik S.E."/>
            <person name="Smith C.D."/>
            <person name="Tupy J.L."/>
            <person name="Whitfield E.J."/>
            <person name="Bayraktaroglu L."/>
            <person name="Berman B.P."/>
            <person name="Bettencourt B.R."/>
            <person name="Celniker S.E."/>
            <person name="de Grey A.D.N.J."/>
            <person name="Drysdale R.A."/>
            <person name="Harris N.L."/>
            <person name="Richter J."/>
            <person name="Russo S."/>
            <person name="Schroeder A.J."/>
            <person name="Shu S.Q."/>
            <person name="Stapleton M."/>
            <person name="Yamada C."/>
            <person name="Ashburner M."/>
            <person name="Gelbart W.M."/>
            <person name="Rubin G.M."/>
            <person name="Lewis S.E."/>
        </authorList>
    </citation>
    <scope>GENOME REANNOTATION</scope>
    <source>
        <strain>Berkeley</strain>
    </source>
</reference>
<evidence type="ECO:0000255" key="1"/>
<evidence type="ECO:0000255" key="2">
    <source>
        <dbReference type="PROSITE-ProRule" id="PRU00497"/>
    </source>
</evidence>
<name>CUP7_DROME</name>
<protein>
    <recommendedName>
        <fullName>Pupal cuticle protein Edg-78E</fullName>
    </recommendedName>
</protein>
<sequence length="122" mass="13347">MYKYLFCLALIGCACADNINKDAQIRSFQNDATDAEGNYQYAYETSNGIQIQEAGNANGARGAVAYVSPEGEHISLTYTADEEGYHPVGDHLPTPPPVPAYVLRALEYIRTHPPAPAQKEQQ</sequence>
<feature type="signal peptide" evidence="1">
    <location>
        <begin position="1"/>
        <end position="16"/>
    </location>
</feature>
<feature type="chain" id="PRO_0000006399" description="Pupal cuticle protein Edg-78E">
    <location>
        <begin position="17"/>
        <end position="122"/>
    </location>
</feature>
<feature type="domain" description="Chitin-binding type R&amp;R" evidence="2">
    <location>
        <begin position="36"/>
        <end position="96"/>
    </location>
</feature>
<gene>
    <name type="primary">Edg78E</name>
    <name type="synonym">EDG-78E</name>
    <name type="ORF">CG7673</name>
</gene>
<organism>
    <name type="scientific">Drosophila melanogaster</name>
    <name type="common">Fruit fly</name>
    <dbReference type="NCBI Taxonomy" id="7227"/>
    <lineage>
        <taxon>Eukaryota</taxon>
        <taxon>Metazoa</taxon>
        <taxon>Ecdysozoa</taxon>
        <taxon>Arthropoda</taxon>
        <taxon>Hexapoda</taxon>
        <taxon>Insecta</taxon>
        <taxon>Pterygota</taxon>
        <taxon>Neoptera</taxon>
        <taxon>Endopterygota</taxon>
        <taxon>Diptera</taxon>
        <taxon>Brachycera</taxon>
        <taxon>Muscomorpha</taxon>
        <taxon>Ephydroidea</taxon>
        <taxon>Drosophilidae</taxon>
        <taxon>Drosophila</taxon>
        <taxon>Sophophora</taxon>
    </lineage>
</organism>
<dbReference type="EMBL" id="M71247">
    <property type="protein sequence ID" value="AAA28499.1"/>
    <property type="molecule type" value="Genomic_DNA"/>
</dbReference>
<dbReference type="EMBL" id="M71248">
    <property type="protein sequence ID" value="AAA28500.1"/>
    <property type="molecule type" value="mRNA"/>
</dbReference>
<dbReference type="EMBL" id="AE014296">
    <property type="protein sequence ID" value="AAF51702.1"/>
    <property type="molecule type" value="Genomic_DNA"/>
</dbReference>
<dbReference type="PIR" id="A49773">
    <property type="entry name" value="A49773"/>
</dbReference>
<dbReference type="RefSeq" id="NP_001287140.1">
    <property type="nucleotide sequence ID" value="NM_001300211.1"/>
</dbReference>
<dbReference type="RefSeq" id="NP_524198.1">
    <property type="nucleotide sequence ID" value="NM_079474.3"/>
</dbReference>
<dbReference type="BioGRID" id="65602">
    <property type="interactions" value="2"/>
</dbReference>
<dbReference type="DIP" id="DIP-19035N"/>
<dbReference type="FunCoup" id="P27779">
    <property type="interactions" value="38"/>
</dbReference>
<dbReference type="IntAct" id="P27779">
    <property type="interactions" value="1"/>
</dbReference>
<dbReference type="STRING" id="7227.FBpp0078062"/>
<dbReference type="PaxDb" id="7227-FBpp0078062"/>
<dbReference type="DNASU" id="40354"/>
<dbReference type="EnsemblMetazoa" id="FBtr0078408">
    <property type="protein sequence ID" value="FBpp0078062"/>
    <property type="gene ID" value="FBgn0000551"/>
</dbReference>
<dbReference type="EnsemblMetazoa" id="FBtr0344634">
    <property type="protein sequence ID" value="FBpp0310951"/>
    <property type="gene ID" value="FBgn0000551"/>
</dbReference>
<dbReference type="GeneID" id="40354"/>
<dbReference type="KEGG" id="dme:Dmel_CG7673"/>
<dbReference type="AGR" id="FB:FBgn0000551"/>
<dbReference type="CTD" id="40354"/>
<dbReference type="FlyBase" id="FBgn0000551">
    <property type="gene designation" value="Edg78E"/>
</dbReference>
<dbReference type="VEuPathDB" id="VectorBase:FBgn0000551"/>
<dbReference type="eggNOG" id="ENOG502T7Y8">
    <property type="taxonomic scope" value="Eukaryota"/>
</dbReference>
<dbReference type="HOGENOM" id="CLU_065450_3_1_1"/>
<dbReference type="InParanoid" id="P27779"/>
<dbReference type="OMA" id="HEEPEIY"/>
<dbReference type="OrthoDB" id="6343684at2759"/>
<dbReference type="PhylomeDB" id="P27779"/>
<dbReference type="BioGRID-ORCS" id="40354">
    <property type="hits" value="0 hits in 1 CRISPR screen"/>
</dbReference>
<dbReference type="GenomeRNAi" id="40354"/>
<dbReference type="PRO" id="PR:P27779"/>
<dbReference type="Proteomes" id="UP000000803">
    <property type="component" value="Chromosome 3L"/>
</dbReference>
<dbReference type="Bgee" id="FBgn0000551">
    <property type="expression patterns" value="Expressed in pupa and 5 other cell types or tissues"/>
</dbReference>
<dbReference type="ExpressionAtlas" id="P27779">
    <property type="expression patterns" value="baseline and differential"/>
</dbReference>
<dbReference type="GO" id="GO:0062129">
    <property type="term" value="C:chitin-based extracellular matrix"/>
    <property type="evidence" value="ECO:0000255"/>
    <property type="project" value="FlyBase"/>
</dbReference>
<dbReference type="GO" id="GO:0008010">
    <property type="term" value="F:structural constituent of chitin-based larval cuticle"/>
    <property type="evidence" value="ECO:0000255"/>
    <property type="project" value="FlyBase"/>
</dbReference>
<dbReference type="GO" id="GO:0008011">
    <property type="term" value="F:structural constituent of pupal chitin-based cuticle"/>
    <property type="evidence" value="ECO:0000304"/>
    <property type="project" value="FlyBase"/>
</dbReference>
<dbReference type="GO" id="GO:0040003">
    <property type="term" value="P:chitin-based cuticle development"/>
    <property type="evidence" value="ECO:0000255"/>
    <property type="project" value="FlyBase"/>
</dbReference>
<dbReference type="InterPro" id="IPR031311">
    <property type="entry name" value="CHIT_BIND_RR_consensus"/>
</dbReference>
<dbReference type="InterPro" id="IPR050468">
    <property type="entry name" value="Cuticle_Struct_Prot"/>
</dbReference>
<dbReference type="InterPro" id="IPR000618">
    <property type="entry name" value="Insect_cuticle"/>
</dbReference>
<dbReference type="PANTHER" id="PTHR10380">
    <property type="entry name" value="CUTICLE PROTEIN"/>
    <property type="match status" value="1"/>
</dbReference>
<dbReference type="PANTHER" id="PTHR10380:SF238">
    <property type="entry name" value="CUTICULAR PROTEIN 65EA-RELATED"/>
    <property type="match status" value="1"/>
</dbReference>
<dbReference type="Pfam" id="PF00379">
    <property type="entry name" value="Chitin_bind_4"/>
    <property type="match status" value="1"/>
</dbReference>
<dbReference type="PRINTS" id="PR00947">
    <property type="entry name" value="CUTICLE"/>
</dbReference>
<dbReference type="PROSITE" id="PS00233">
    <property type="entry name" value="CHIT_BIND_RR_1"/>
    <property type="match status" value="1"/>
</dbReference>
<dbReference type="PROSITE" id="PS51155">
    <property type="entry name" value="CHIT_BIND_RR_2"/>
    <property type="match status" value="1"/>
</dbReference>
<keyword id="KW-0193">Cuticle</keyword>
<keyword id="KW-1185">Reference proteome</keyword>
<keyword id="KW-0732">Signal</keyword>
<comment type="function">
    <text>Component of the cuticle of the pupa of fruit fly.</text>
</comment>
<comment type="tissue specificity">
    <text>Imaginal (anterior) epidermis.</text>
</comment>
<comment type="miscellaneous">
    <text>The sequence shown is from genomic DNA.</text>
</comment>